<proteinExistence type="evidence at protein level"/>
<gene>
    <name evidence="9" type="primary">D7L1</name>
</gene>
<feature type="signal peptide" evidence="2">
    <location>
        <begin position="1"/>
        <end position="16"/>
    </location>
</feature>
<feature type="chain" id="PRO_5004321096" description="Long form salivary protein D7L1" evidence="2">
    <location>
        <begin position="17"/>
        <end position="311"/>
    </location>
</feature>
<feature type="binding site" evidence="5 12">
    <location>
        <position position="146"/>
    </location>
    <ligand>
        <name>ADP</name>
        <dbReference type="ChEBI" id="CHEBI:456216"/>
    </ligand>
</feature>
<feature type="binding site" evidence="5 12">
    <location>
        <position position="149"/>
    </location>
    <ligand>
        <name>ADP</name>
        <dbReference type="ChEBI" id="CHEBI:456216"/>
    </ligand>
</feature>
<feature type="binding site" evidence="5 12">
    <location>
        <position position="153"/>
    </location>
    <ligand>
        <name>ADP</name>
        <dbReference type="ChEBI" id="CHEBI:456216"/>
    </ligand>
</feature>
<feature type="binding site" evidence="5 12">
    <location>
        <position position="160"/>
    </location>
    <ligand>
        <name>ADP</name>
        <dbReference type="ChEBI" id="CHEBI:456216"/>
    </ligand>
</feature>
<feature type="binding site" evidence="5 12">
    <location>
        <position position="281"/>
    </location>
    <ligand>
        <name>ADP</name>
        <dbReference type="ChEBI" id="CHEBI:456216"/>
    </ligand>
</feature>
<feature type="binding site" evidence="5 12">
    <location>
        <position position="282"/>
    </location>
    <ligand>
        <name>ADP</name>
        <dbReference type="ChEBI" id="CHEBI:456216"/>
    </ligand>
</feature>
<feature type="binding site" evidence="5 12">
    <location>
        <position position="283"/>
    </location>
    <ligand>
        <name>ADP</name>
        <dbReference type="ChEBI" id="CHEBI:456216"/>
    </ligand>
</feature>
<feature type="disulfide bond" evidence="5 12">
    <location>
        <begin position="34"/>
        <end position="67"/>
    </location>
</feature>
<feature type="disulfide bond" evidence="5 12">
    <location>
        <begin position="63"/>
        <end position="120"/>
    </location>
</feature>
<feature type="disulfide bond" evidence="5 12">
    <location>
        <begin position="170"/>
        <end position="202"/>
    </location>
</feature>
<feature type="disulfide bond" evidence="5 12">
    <location>
        <begin position="183"/>
        <end position="311"/>
    </location>
</feature>
<feature type="disulfide bond" evidence="5 12">
    <location>
        <begin position="244"/>
        <end position="258"/>
    </location>
</feature>
<feature type="sequence conflict" description="In Ref. 1; AAL16046." evidence="9" ref="1">
    <original>N</original>
    <variation>S</variation>
    <location>
        <position position="53"/>
    </location>
</feature>
<feature type="sequence conflict" description="In Ref. 1; AAL16046." evidence="9" ref="1">
    <original>R</original>
    <variation>Q</variation>
    <location>
        <position position="87"/>
    </location>
</feature>
<feature type="sequence conflict" description="In Ref. 1; AAL16046." evidence="9" ref="1">
    <original>AKSDAIS</original>
    <variation>TKGDAIA</variation>
    <location>
        <begin position="101"/>
        <end position="107"/>
    </location>
</feature>
<feature type="helix" evidence="13">
    <location>
        <begin position="24"/>
        <end position="38"/>
    </location>
</feature>
<feature type="helix" evidence="13">
    <location>
        <begin position="43"/>
        <end position="50"/>
    </location>
</feature>
<feature type="helix" evidence="13">
    <location>
        <begin position="61"/>
        <end position="71"/>
    </location>
</feature>
<feature type="strand" evidence="13">
    <location>
        <begin position="77"/>
        <end position="80"/>
    </location>
</feature>
<feature type="helix" evidence="13">
    <location>
        <begin position="82"/>
        <end position="91"/>
    </location>
</feature>
<feature type="helix" evidence="13">
    <location>
        <begin position="93"/>
        <end position="96"/>
    </location>
</feature>
<feature type="helix" evidence="13">
    <location>
        <begin position="100"/>
        <end position="110"/>
    </location>
</feature>
<feature type="helix" evidence="13">
    <location>
        <begin position="120"/>
        <end position="133"/>
    </location>
</feature>
<feature type="turn" evidence="13">
    <location>
        <begin position="134"/>
        <end position="136"/>
    </location>
</feature>
<feature type="helix" evidence="13">
    <location>
        <begin position="137"/>
        <end position="141"/>
    </location>
</feature>
<feature type="helix" evidence="13">
    <location>
        <begin position="146"/>
        <end position="155"/>
    </location>
</feature>
<feature type="helix" evidence="13">
    <location>
        <begin position="166"/>
        <end position="174"/>
    </location>
</feature>
<feature type="helix" evidence="13">
    <location>
        <begin position="180"/>
        <end position="188"/>
    </location>
</feature>
<feature type="helix" evidence="13">
    <location>
        <begin position="196"/>
        <end position="206"/>
    </location>
</feature>
<feature type="helix" evidence="13">
    <location>
        <begin position="218"/>
        <end position="227"/>
    </location>
</feature>
<feature type="helix" evidence="13">
    <location>
        <begin position="234"/>
        <end position="242"/>
    </location>
</feature>
<feature type="helix" evidence="13">
    <location>
        <begin position="248"/>
        <end position="250"/>
    </location>
</feature>
<feature type="helix" evidence="13">
    <location>
        <begin position="251"/>
        <end position="263"/>
    </location>
</feature>
<feature type="helix" evidence="13">
    <location>
        <begin position="265"/>
        <end position="279"/>
    </location>
</feature>
<feature type="helix" evidence="13">
    <location>
        <begin position="284"/>
        <end position="286"/>
    </location>
</feature>
<feature type="helix" evidence="13">
    <location>
        <begin position="288"/>
        <end position="290"/>
    </location>
</feature>
<feature type="helix" evidence="13">
    <location>
        <begin position="295"/>
        <end position="308"/>
    </location>
</feature>
<reference evidence="10" key="1">
    <citation type="journal article" date="2002" name="Insect Mol. Biol.">
        <title>The D7 family of salivary proteins in blood sucking diptera.</title>
        <authorList>
            <person name="Valenzuela J.G."/>
            <person name="Charlab R."/>
            <person name="Gonzalez E.C."/>
            <person name="de Miranda-Santos I.K.F."/>
            <person name="Marinotti O."/>
            <person name="Francischetti I.M.B."/>
            <person name="Ribeiro J.M.C."/>
        </authorList>
    </citation>
    <scope>NUCLEOTIDE SEQUENCE [MRNA]</scope>
    <scope>TISSUE SPECIFICITY</scope>
</reference>
<reference evidence="9" key="2">
    <citation type="submission" date="2007-03" db="EMBL/GenBank/DDBJ databases">
        <title>Annotation of Culex pipiens quinquefasciatus.</title>
        <authorList>
            <consortium name="The Broad Institute Genome Sequencing Platform"/>
            <person name="Atkinson P.W."/>
            <person name="Hemingway J."/>
            <person name="Christensen B.M."/>
            <person name="Higgs S."/>
            <person name="Kodira C.D."/>
            <person name="Hannick L.I."/>
            <person name="Megy K."/>
            <person name="O'Leary S.B."/>
            <person name="Pearson M."/>
            <person name="Haas B.J."/>
            <person name="Mauceli E."/>
            <person name="Wortman J.R."/>
            <person name="Lee N.H."/>
            <person name="Guigo R."/>
            <person name="Stanke M."/>
            <person name="Alvarado L."/>
            <person name="Amedeo P."/>
            <person name="Antoine C.H."/>
            <person name="Arensburger P."/>
            <person name="Bidwell S.L."/>
            <person name="Crawford M."/>
            <person name="Camaro F."/>
            <person name="Devon K."/>
            <person name="Engels R."/>
            <person name="Hammond M."/>
            <person name="Howarth C."/>
            <person name="Koehrsen M."/>
            <person name="Lawson D."/>
            <person name="Montgomery P."/>
            <person name="Nene V."/>
            <person name="Nusbaum C."/>
            <person name="Puiu D."/>
            <person name="Romero-Severson J."/>
            <person name="Severson D.W."/>
            <person name="Shumway M."/>
            <person name="Sisk P."/>
            <person name="Stolte C."/>
            <person name="Zeng Q."/>
            <person name="Eisenstadt E."/>
            <person name="Fraser-Liggett C.M."/>
            <person name="Strausberg R."/>
            <person name="Galagan J."/>
            <person name="Birren B."/>
            <person name="Collins F.H."/>
        </authorList>
    </citation>
    <scope>NUCLEOTIDE SEQUENCE [LARGE SCALE GENOMIC DNA]</scope>
    <source>
        <strain evidence="8">JHB</strain>
    </source>
</reference>
<reference evidence="9" key="3">
    <citation type="journal article" date="2020" name="World Allergy Organ. J.">
        <title>Novel salivary gland allergens from tropical mosquito species and IgE reactivity in allergic patients.</title>
        <authorList>
            <person name="Opasawatchai A."/>
            <person name="Yolwong W."/>
            <person name="Thuncharoen W."/>
            <person name="Inrueangsri N."/>
            <person name="Itsaradisaikul S."/>
            <person name="Sasisakulporn C."/>
            <person name="Jotikasthira W."/>
            <person name="Matangkasombut O."/>
            <person name="Reamtong O."/>
            <person name="Manuyakorn W."/>
            <person name="Songnuan W."/>
            <person name="Matangkasombut P."/>
        </authorList>
    </citation>
    <scope>IDENTIFICATION BY MASS SPECTROMETRY</scope>
    <scope>TISSUE SPECIFICITY</scope>
    <scope>ALLERGEN</scope>
</reference>
<reference evidence="12" key="4">
    <citation type="journal article" date="2020" name="Nat. Commun.">
        <title>ADP binding by the Culex quinquefasciatus mosquito D7 salivary protein enhances blood feeding on mammals.</title>
        <authorList>
            <person name="Martin-Martin I."/>
            <person name="Paige A."/>
            <person name="Valenzuela Leon P.C."/>
            <person name="Gittis A.G."/>
            <person name="Kern O."/>
            <person name="Bonilla B."/>
            <person name="Chagas A.C."/>
            <person name="Ganesan S."/>
            <person name="Smith L.B."/>
            <person name="Garboczi D.N."/>
            <person name="Calvo E."/>
        </authorList>
    </citation>
    <scope>X-RAY CRYSTALLOGRAPHY (1.97 ANGSTROMS) OF 17-311 IN COMPLEX WITH ADP</scope>
    <scope>FUNCTION</scope>
    <scope>TISSUE SPECIFICITY</scope>
    <scope>DEVELOPMENTAL STAGE</scope>
    <scope>DISULFIDE BONDS</scope>
</reference>
<comment type="function">
    <text evidence="1 5">Modulates blood feeding of female mosquitoes on vertebrate species by binding and sequestering different mediators involved in the host response (By similarity). Binds adenine, adenosine, AMP, ADP and ATP, with the highest affinity to ATP and ADP (PubMed:32518308). Inhibits agonist-induced platelet aggregation and hemostasis (PubMed:32518308).</text>
</comment>
<comment type="subcellular location">
    <subcellularLocation>
        <location evidence="1">Secreted</location>
    </subcellularLocation>
</comment>
<comment type="tissue specificity">
    <text evidence="3 4 5">Distal lateral and medial lobes of female mosquito salivary gland (at protein level) (PubMed:32099589, PubMed:32518308). Expressed in the head and thorax of the female mosquitoes, where the salivary glands are located (PubMed:32518308). Expressed in salivary gland (PubMed:11966880). Not detected in the female mosquito abdomen (PubMed:32518308). Not detected in the male mosquito tissues (PubMed:32518308).</text>
</comment>
<comment type="developmental stage">
    <text evidence="5">Not detected in larval and pupal stages.</text>
</comment>
<comment type="allergen">
    <text evidence="4">Causes an allergic reaction in human (PubMed:32099589). Binds to IgE (PubMed:32099589).</text>
</comment>
<comment type="miscellaneous">
    <text evidence="5">The amount of D7L1 in the salivary glands of 5-day-old Culex quinquefasciatus is approximately 31 ng (PubMed:32518308). During the blood meal, mosquito injects approximately 7 ng of D7L1 into the host (PubMed:32518308).</text>
</comment>
<comment type="similarity">
    <text evidence="9">Belongs to the PBP/GOBP family.</text>
</comment>
<accession>A0A1S4K3K8</accession>
<accession>Q95V93</accession>
<dbReference type="EMBL" id="AF420269">
    <property type="protein sequence ID" value="AAL16046.1"/>
    <property type="molecule type" value="mRNA"/>
</dbReference>
<dbReference type="PDB" id="6V4C">
    <property type="method" value="X-ray"/>
    <property type="resolution" value="1.97 A"/>
    <property type="chains" value="A=17-311"/>
</dbReference>
<dbReference type="PDBsum" id="6V4C"/>
<dbReference type="SMR" id="A0A1S4K3K8"/>
<dbReference type="Allergome" id="12179">
    <property type="allergen name" value="Cul q 3.0101"/>
</dbReference>
<dbReference type="Allergome" id="837">
    <property type="allergen name" value="Cul q 3"/>
</dbReference>
<dbReference type="EnsemblMetazoa" id="CPIJ014549-RA">
    <property type="protein sequence ID" value="CPIJ014549-PA"/>
    <property type="gene ID" value="CPIJ014549"/>
</dbReference>
<dbReference type="VEuPathDB" id="VectorBase:CPIJ014549"/>
<dbReference type="VEuPathDB" id="VectorBase:CQUJHB012682"/>
<dbReference type="HOGENOM" id="CLU_077766_0_0_1"/>
<dbReference type="InParanoid" id="A0A1S4K3K8"/>
<dbReference type="OrthoDB" id="7722701at2759"/>
<dbReference type="Proteomes" id="UP000002320">
    <property type="component" value="Unassembled WGS sequence"/>
</dbReference>
<dbReference type="GO" id="GO:0005615">
    <property type="term" value="C:extracellular space"/>
    <property type="evidence" value="ECO:0007669"/>
    <property type="project" value="TreeGrafter"/>
</dbReference>
<dbReference type="GO" id="GO:0005524">
    <property type="term" value="F:ATP binding"/>
    <property type="evidence" value="ECO:0007669"/>
    <property type="project" value="UniProtKB-KW"/>
</dbReference>
<dbReference type="GO" id="GO:0019863">
    <property type="term" value="F:IgE binding"/>
    <property type="evidence" value="ECO:0000314"/>
    <property type="project" value="UniProtKB"/>
</dbReference>
<dbReference type="GO" id="GO:0005549">
    <property type="term" value="F:odorant binding"/>
    <property type="evidence" value="ECO:0007669"/>
    <property type="project" value="InterPro"/>
</dbReference>
<dbReference type="GO" id="GO:0090729">
    <property type="term" value="F:toxin activity"/>
    <property type="evidence" value="ECO:0007669"/>
    <property type="project" value="UniProtKB-KW"/>
</dbReference>
<dbReference type="GO" id="GO:0007608">
    <property type="term" value="P:sensory perception of smell"/>
    <property type="evidence" value="ECO:0007669"/>
    <property type="project" value="TreeGrafter"/>
</dbReference>
<dbReference type="Gene3D" id="1.10.238.20">
    <property type="entry name" value="Pheromone/general odorant binding protein domain"/>
    <property type="match status" value="2"/>
</dbReference>
<dbReference type="InterPro" id="IPR006170">
    <property type="entry name" value="PBP/GOBP"/>
</dbReference>
<dbReference type="InterPro" id="IPR036728">
    <property type="entry name" value="PBP_GOBP_sf"/>
</dbReference>
<dbReference type="PANTHER" id="PTHR11857:SF43">
    <property type="entry name" value="GEO07291P1-RELATED"/>
    <property type="match status" value="1"/>
</dbReference>
<dbReference type="PANTHER" id="PTHR11857">
    <property type="entry name" value="ODORANT BINDING PROTEIN-RELATED"/>
    <property type="match status" value="1"/>
</dbReference>
<dbReference type="Pfam" id="PF01395">
    <property type="entry name" value="PBP_GOBP"/>
    <property type="match status" value="2"/>
</dbReference>
<dbReference type="SUPFAM" id="SSF47565">
    <property type="entry name" value="Insect pheromone/odorant-binding proteins"/>
    <property type="match status" value="2"/>
</dbReference>
<evidence type="ECO:0000250" key="1">
    <source>
        <dbReference type="UniProtKB" id="P18153"/>
    </source>
</evidence>
<evidence type="ECO:0000255" key="2"/>
<evidence type="ECO:0000269" key="3">
    <source>
    </source>
</evidence>
<evidence type="ECO:0000269" key="4">
    <source>
    </source>
</evidence>
<evidence type="ECO:0000269" key="5">
    <source>
    </source>
</evidence>
<evidence type="ECO:0000303" key="6">
    <source>
    </source>
</evidence>
<evidence type="ECO:0000303" key="7">
    <source>
    </source>
</evidence>
<evidence type="ECO:0000303" key="8">
    <source ref="2"/>
</evidence>
<evidence type="ECO:0000305" key="9"/>
<evidence type="ECO:0000312" key="10">
    <source>
        <dbReference type="EMBL" id="AAL16046.1"/>
    </source>
</evidence>
<evidence type="ECO:0000312" key="11">
    <source>
        <dbReference type="Proteomes" id="UP000002320"/>
    </source>
</evidence>
<evidence type="ECO:0007744" key="12">
    <source>
        <dbReference type="PDB" id="6V4C"/>
    </source>
</evidence>
<evidence type="ECO:0007829" key="13">
    <source>
        <dbReference type="PDB" id="6V4C"/>
    </source>
</evidence>
<organism evidence="11">
    <name type="scientific">Culex quinquefasciatus</name>
    <name type="common">Southern house mosquito</name>
    <name type="synonym">Culex pungens</name>
    <dbReference type="NCBI Taxonomy" id="7176"/>
    <lineage>
        <taxon>Eukaryota</taxon>
        <taxon>Metazoa</taxon>
        <taxon>Ecdysozoa</taxon>
        <taxon>Arthropoda</taxon>
        <taxon>Hexapoda</taxon>
        <taxon>Insecta</taxon>
        <taxon>Pterygota</taxon>
        <taxon>Neoptera</taxon>
        <taxon>Endopterygota</taxon>
        <taxon>Diptera</taxon>
        <taxon>Nematocera</taxon>
        <taxon>Culicoidea</taxon>
        <taxon>Culicidae</taxon>
        <taxon>Culicinae</taxon>
        <taxon>Culicini</taxon>
        <taxon>Culex</taxon>
        <taxon>Culex</taxon>
    </lineage>
</organism>
<name>D7L1_CULQU</name>
<sequence length="311" mass="35273">MKALIFLGAIIAGVLSDEWSPMDPEEVAFEEAKCMEDHFGNDFGLAEKWMKWNLAESDGKTACYVKCLVEALGMYDKQAFQPNNIKRQYEAYKSDNGVDQAKSDAISNELGKIDAKDGKCESIAKGFIQVNNANKGVLEKIYLLDSSVRDAIYKKNPQIKPKGISIFRFCGKQFYQDGEAAYCNVRKHGFSDDPKFIKHSNCTTRGMRWMKKNGEMDESAILRGLHAVNENGKDDVVKKSLQNCKAKDESKARDYYKCIYDGLGEQLFMKVLDYIEVRSENYSYRLREATSKYDANAMRSKVKALDSEAKC</sequence>
<protein>
    <recommendedName>
        <fullName evidence="9">Long form salivary protein D7L1</fullName>
    </recommendedName>
    <alternativeName>
        <fullName evidence="10">Long form D7clu1 salivary protein</fullName>
        <shortName evidence="7">CxD7L1</shortName>
    </alternativeName>
    <allergenName evidence="6">Cul q 3</allergenName>
</protein>
<keyword id="KW-0002">3D-structure</keyword>
<keyword id="KW-0020">Allergen</keyword>
<keyword id="KW-0067">ATP-binding</keyword>
<keyword id="KW-1015">Disulfide bond</keyword>
<keyword id="KW-1199">Hemostasis impairing toxin</keyword>
<keyword id="KW-0547">Nucleotide-binding</keyword>
<keyword id="KW-1201">Platelet aggregation inhibiting toxin</keyword>
<keyword id="KW-1185">Reference proteome</keyword>
<keyword id="KW-0964">Secreted</keyword>
<keyword id="KW-0732">Signal</keyword>
<keyword id="KW-0800">Toxin</keyword>